<name>ALR1_SCHPO</name>
<feature type="chain" id="PRO_0000114604" description="Alanine racemase, catabolic">
    <location>
        <begin position="1"/>
        <end position="375"/>
    </location>
</feature>
<feature type="active site" description="Proton acceptor; specific for D-alanine" evidence="1">
    <location>
        <position position="38"/>
    </location>
</feature>
<feature type="active site" description="Proton acceptor; specific for L-alanine" evidence="1">
    <location>
        <position position="269"/>
    </location>
</feature>
<feature type="modified residue" description="N6-(pyridoxal phosphate)lysine" evidence="1">
    <location>
        <position position="38"/>
    </location>
</feature>
<protein>
    <recommendedName>
        <fullName>Alanine racemase, catabolic</fullName>
        <ecNumber evidence="2">5.1.1.1</ecNumber>
    </recommendedName>
</protein>
<dbReference type="EC" id="5.1.1.1" evidence="2"/>
<dbReference type="EMBL" id="CU329672">
    <property type="protein sequence ID" value="CAA19068.1"/>
    <property type="molecule type" value="Genomic_DNA"/>
</dbReference>
<dbReference type="PIR" id="T41661">
    <property type="entry name" value="T41661"/>
</dbReference>
<dbReference type="RefSeq" id="NP_588518.1">
    <property type="nucleotide sequence ID" value="NM_001023507.2"/>
</dbReference>
<dbReference type="SMR" id="O59828"/>
<dbReference type="BioGRID" id="275325">
    <property type="interactions" value="1"/>
</dbReference>
<dbReference type="FunCoup" id="O59828">
    <property type="interactions" value="418"/>
</dbReference>
<dbReference type="STRING" id="284812.O59828"/>
<dbReference type="PaxDb" id="4896-SPCC965.08c.1"/>
<dbReference type="EnsemblFungi" id="SPCC965.08c.1">
    <property type="protein sequence ID" value="SPCC965.08c.1:pep"/>
    <property type="gene ID" value="SPCC965.08c"/>
</dbReference>
<dbReference type="GeneID" id="2538742"/>
<dbReference type="KEGG" id="spo:2538742"/>
<dbReference type="PomBase" id="SPCC965.08c">
    <property type="gene designation" value="alr1"/>
</dbReference>
<dbReference type="VEuPathDB" id="FungiDB:SPCC965.08c"/>
<dbReference type="eggNOG" id="ENOG502S6C6">
    <property type="taxonomic scope" value="Eukaryota"/>
</dbReference>
<dbReference type="HOGENOM" id="CLU_028393_1_0_1"/>
<dbReference type="InParanoid" id="O59828"/>
<dbReference type="PhylomeDB" id="O59828"/>
<dbReference type="BRENDA" id="5.1.1.1">
    <property type="organism ID" value="5613"/>
</dbReference>
<dbReference type="UniPathway" id="UPA00042">
    <property type="reaction ID" value="UER00497"/>
</dbReference>
<dbReference type="PRO" id="PR:O59828"/>
<dbReference type="Proteomes" id="UP000002485">
    <property type="component" value="Chromosome III"/>
</dbReference>
<dbReference type="GO" id="GO:0005829">
    <property type="term" value="C:cytosol"/>
    <property type="evidence" value="ECO:0007005"/>
    <property type="project" value="PomBase"/>
</dbReference>
<dbReference type="GO" id="GO:0005634">
    <property type="term" value="C:nucleus"/>
    <property type="evidence" value="ECO:0007005"/>
    <property type="project" value="PomBase"/>
</dbReference>
<dbReference type="GO" id="GO:0008784">
    <property type="term" value="F:alanine racemase activity"/>
    <property type="evidence" value="ECO:0000314"/>
    <property type="project" value="PomBase"/>
</dbReference>
<dbReference type="GO" id="GO:0030170">
    <property type="term" value="F:pyridoxal phosphate binding"/>
    <property type="evidence" value="ECO:0000318"/>
    <property type="project" value="GO_Central"/>
</dbReference>
<dbReference type="GO" id="GO:0030378">
    <property type="term" value="F:serine racemase activity"/>
    <property type="evidence" value="ECO:0000314"/>
    <property type="project" value="PomBase"/>
</dbReference>
<dbReference type="GO" id="GO:0030632">
    <property type="term" value="P:D-alanine biosynthetic process"/>
    <property type="evidence" value="ECO:0007669"/>
    <property type="project" value="UniProtKB-UniPathway"/>
</dbReference>
<dbReference type="GO" id="GO:0055130">
    <property type="term" value="P:D-alanine catabolic process"/>
    <property type="evidence" value="ECO:0000314"/>
    <property type="project" value="PomBase"/>
</dbReference>
<dbReference type="GO" id="GO:0036088">
    <property type="term" value="P:D-serine catabolic process"/>
    <property type="evidence" value="ECO:0000314"/>
    <property type="project" value="PomBase"/>
</dbReference>
<dbReference type="CDD" id="cd06827">
    <property type="entry name" value="PLPDE_III_AR_proteobact"/>
    <property type="match status" value="1"/>
</dbReference>
<dbReference type="FunFam" id="2.40.37.10:FF:000002">
    <property type="entry name" value="Alanine racemase"/>
    <property type="match status" value="1"/>
</dbReference>
<dbReference type="FunFam" id="3.20.20.10:FF:000002">
    <property type="entry name" value="Alanine racemase"/>
    <property type="match status" value="1"/>
</dbReference>
<dbReference type="Gene3D" id="3.20.20.10">
    <property type="entry name" value="Alanine racemase"/>
    <property type="match status" value="1"/>
</dbReference>
<dbReference type="Gene3D" id="2.40.37.10">
    <property type="entry name" value="Lyase, Ornithine Decarboxylase, Chain A, domain 1"/>
    <property type="match status" value="1"/>
</dbReference>
<dbReference type="HAMAP" id="MF_01201">
    <property type="entry name" value="Ala_racemase"/>
    <property type="match status" value="1"/>
</dbReference>
<dbReference type="InterPro" id="IPR000821">
    <property type="entry name" value="Ala_racemase"/>
</dbReference>
<dbReference type="InterPro" id="IPR009006">
    <property type="entry name" value="Ala_racemase/Decarboxylase_C"/>
</dbReference>
<dbReference type="InterPro" id="IPR011079">
    <property type="entry name" value="Ala_racemase_C"/>
</dbReference>
<dbReference type="InterPro" id="IPR001608">
    <property type="entry name" value="Ala_racemase_N"/>
</dbReference>
<dbReference type="InterPro" id="IPR020622">
    <property type="entry name" value="Ala_racemase_pyridoxalP-BS"/>
</dbReference>
<dbReference type="InterPro" id="IPR029066">
    <property type="entry name" value="PLP-binding_barrel"/>
</dbReference>
<dbReference type="NCBIfam" id="TIGR00492">
    <property type="entry name" value="alr"/>
    <property type="match status" value="1"/>
</dbReference>
<dbReference type="PANTHER" id="PTHR30511">
    <property type="entry name" value="ALANINE RACEMASE"/>
    <property type="match status" value="1"/>
</dbReference>
<dbReference type="PANTHER" id="PTHR30511:SF0">
    <property type="entry name" value="ALANINE RACEMASE, CATABOLIC-RELATED"/>
    <property type="match status" value="1"/>
</dbReference>
<dbReference type="Pfam" id="PF00842">
    <property type="entry name" value="Ala_racemase_C"/>
    <property type="match status" value="1"/>
</dbReference>
<dbReference type="Pfam" id="PF01168">
    <property type="entry name" value="Ala_racemase_N"/>
    <property type="match status" value="1"/>
</dbReference>
<dbReference type="PRINTS" id="PR00992">
    <property type="entry name" value="ALARACEMASE"/>
</dbReference>
<dbReference type="SMART" id="SM01005">
    <property type="entry name" value="Ala_racemase_C"/>
    <property type="match status" value="1"/>
</dbReference>
<dbReference type="SUPFAM" id="SSF50621">
    <property type="entry name" value="Alanine racemase C-terminal domain-like"/>
    <property type="match status" value="1"/>
</dbReference>
<dbReference type="SUPFAM" id="SSF51419">
    <property type="entry name" value="PLP-binding barrel"/>
    <property type="match status" value="1"/>
</dbReference>
<dbReference type="PROSITE" id="PS00395">
    <property type="entry name" value="ALANINE_RACEMASE"/>
    <property type="match status" value="1"/>
</dbReference>
<evidence type="ECO:0000250" key="1"/>
<evidence type="ECO:0000269" key="2">
    <source>
    </source>
</evidence>
<evidence type="ECO:0000305" key="3"/>
<proteinExistence type="evidence at protein level"/>
<accession>O59828</accession>
<keyword id="KW-0413">Isomerase</keyword>
<keyword id="KW-0663">Pyridoxal phosphate</keyword>
<keyword id="KW-1185">Reference proteome</keyword>
<reference key="1">
    <citation type="journal article" date="2002" name="Nature">
        <title>The genome sequence of Schizosaccharomyces pombe.</title>
        <authorList>
            <person name="Wood V."/>
            <person name="Gwilliam R."/>
            <person name="Rajandream M.A."/>
            <person name="Lyne M.H."/>
            <person name="Lyne R."/>
            <person name="Stewart A."/>
            <person name="Sgouros J.G."/>
            <person name="Peat N."/>
            <person name="Hayles J."/>
            <person name="Baker S.G."/>
            <person name="Basham D."/>
            <person name="Bowman S."/>
            <person name="Brooks K."/>
            <person name="Brown D."/>
            <person name="Brown S."/>
            <person name="Chillingworth T."/>
            <person name="Churcher C.M."/>
            <person name="Collins M."/>
            <person name="Connor R."/>
            <person name="Cronin A."/>
            <person name="Davis P."/>
            <person name="Feltwell T."/>
            <person name="Fraser A."/>
            <person name="Gentles S."/>
            <person name="Goble A."/>
            <person name="Hamlin N."/>
            <person name="Harris D.E."/>
            <person name="Hidalgo J."/>
            <person name="Hodgson G."/>
            <person name="Holroyd S."/>
            <person name="Hornsby T."/>
            <person name="Howarth S."/>
            <person name="Huckle E.J."/>
            <person name="Hunt S."/>
            <person name="Jagels K."/>
            <person name="James K.D."/>
            <person name="Jones L."/>
            <person name="Jones M."/>
            <person name="Leather S."/>
            <person name="McDonald S."/>
            <person name="McLean J."/>
            <person name="Mooney P."/>
            <person name="Moule S."/>
            <person name="Mungall K.L."/>
            <person name="Murphy L.D."/>
            <person name="Niblett D."/>
            <person name="Odell C."/>
            <person name="Oliver K."/>
            <person name="O'Neil S."/>
            <person name="Pearson D."/>
            <person name="Quail M.A."/>
            <person name="Rabbinowitsch E."/>
            <person name="Rutherford K.M."/>
            <person name="Rutter S."/>
            <person name="Saunders D."/>
            <person name="Seeger K."/>
            <person name="Sharp S."/>
            <person name="Skelton J."/>
            <person name="Simmonds M.N."/>
            <person name="Squares R."/>
            <person name="Squares S."/>
            <person name="Stevens K."/>
            <person name="Taylor K."/>
            <person name="Taylor R.G."/>
            <person name="Tivey A."/>
            <person name="Walsh S.V."/>
            <person name="Warren T."/>
            <person name="Whitehead S."/>
            <person name="Woodward J.R."/>
            <person name="Volckaert G."/>
            <person name="Aert R."/>
            <person name="Robben J."/>
            <person name="Grymonprez B."/>
            <person name="Weltjens I."/>
            <person name="Vanstreels E."/>
            <person name="Rieger M."/>
            <person name="Schaefer M."/>
            <person name="Mueller-Auer S."/>
            <person name="Gabel C."/>
            <person name="Fuchs M."/>
            <person name="Duesterhoeft A."/>
            <person name="Fritzc C."/>
            <person name="Holzer E."/>
            <person name="Moestl D."/>
            <person name="Hilbert H."/>
            <person name="Borzym K."/>
            <person name="Langer I."/>
            <person name="Beck A."/>
            <person name="Lehrach H."/>
            <person name="Reinhardt R."/>
            <person name="Pohl T.M."/>
            <person name="Eger P."/>
            <person name="Zimmermann W."/>
            <person name="Wedler H."/>
            <person name="Wambutt R."/>
            <person name="Purnelle B."/>
            <person name="Goffeau A."/>
            <person name="Cadieu E."/>
            <person name="Dreano S."/>
            <person name="Gloux S."/>
            <person name="Lelaure V."/>
            <person name="Mottier S."/>
            <person name="Galibert F."/>
            <person name="Aves S.J."/>
            <person name="Xiang Z."/>
            <person name="Hunt C."/>
            <person name="Moore K."/>
            <person name="Hurst S.M."/>
            <person name="Lucas M."/>
            <person name="Rochet M."/>
            <person name="Gaillardin C."/>
            <person name="Tallada V.A."/>
            <person name="Garzon A."/>
            <person name="Thode G."/>
            <person name="Daga R.R."/>
            <person name="Cruzado L."/>
            <person name="Jimenez J."/>
            <person name="Sanchez M."/>
            <person name="del Rey F."/>
            <person name="Benito J."/>
            <person name="Dominguez A."/>
            <person name="Revuelta J.L."/>
            <person name="Moreno S."/>
            <person name="Armstrong J."/>
            <person name="Forsburg S.L."/>
            <person name="Cerutti L."/>
            <person name="Lowe T."/>
            <person name="McCombie W.R."/>
            <person name="Paulsen I."/>
            <person name="Potashkin J."/>
            <person name="Shpakovski G.V."/>
            <person name="Ussery D."/>
            <person name="Barrell B.G."/>
            <person name="Nurse P."/>
        </authorList>
    </citation>
    <scope>NUCLEOTIDE SEQUENCE [LARGE SCALE GENOMIC DNA]</scope>
    <source>
        <strain>972 / ATCC 24843</strain>
    </source>
</reference>
<reference key="2">
    <citation type="journal article" date="2001" name="J. Bacteriol.">
        <title>Functional characterization of alanine racemase from Schizosaccharomyces pombe: a eucaryotic counterpart to bacterial alanine racemase.</title>
        <authorList>
            <person name="Uo T."/>
            <person name="Yoshimura T."/>
            <person name="Tanaka N."/>
            <person name="Takegawa K."/>
            <person name="Esaki N."/>
        </authorList>
    </citation>
    <scope>CATALYTIC ACTIVITY</scope>
    <scope>COFACTOR</scope>
    <scope>BIOPHYSICOCHEMICAL PROPERTIES</scope>
    <source>
        <strain>SP1</strain>
    </source>
</reference>
<sequence>MRGAKSVIDLHAIAHNYNVAKQMMLQKNPSGHVLAIVKANAYGHGAVQVARFLLKHCSSIDGFGVSSIEEALELRHGGIYNKIVLLEGFFTEEDELKLIDDYNFSIIIHSEDQVNSFIKYPFNRPVEIWLKLDSGMNRLGFTPSQFMKFYNLLSNNKNVSNIGKITHFAFADMLENPEHTLKQWDIFEKSVAHLPGPLSAGGSAIILGWLNTVCTDWLRAGIMLYGISPFLSKNKDSKTPESVNIKPAMKLVSTIISVKHVDKGQPIGYGGRYVATRDMKLGVVAMGYGDGFPRQVKDGCPVLVNGVKAPIVGRVSMDMLTVDLSDIPDVKPGDEVIFWGTPELTVADIAKYCSDTSPYELVTKLTRRVPLQYTY</sequence>
<gene>
    <name type="primary">alr1</name>
    <name type="ORF">SPCC965.08c</name>
</gene>
<comment type="catalytic activity">
    <reaction evidence="2">
        <text>L-alanine = D-alanine</text>
        <dbReference type="Rhea" id="RHEA:20249"/>
        <dbReference type="ChEBI" id="CHEBI:57416"/>
        <dbReference type="ChEBI" id="CHEBI:57972"/>
        <dbReference type="EC" id="5.1.1.1"/>
    </reaction>
</comment>
<comment type="cofactor">
    <cofactor evidence="2">
        <name>pyridoxal 5'-phosphate</name>
        <dbReference type="ChEBI" id="CHEBI:597326"/>
    </cofactor>
</comment>
<comment type="biophysicochemical properties">
    <kinetics>
        <KM evidence="2">5 mM for L-alanine</KM>
        <KM evidence="2">2.4 mM for D-alanine</KM>
        <Vmax evidence="2">679.0 umol/min/mg enzyme with L-alanine as substrate</Vmax>
        <Vmax evidence="2">350.0 umol/min/mg enzyme with D-alanine as substrate</Vmax>
    </kinetics>
    <phDependence>
        <text evidence="2">Optimum pH is 9.0-9.5.</text>
    </phDependence>
</comment>
<comment type="pathway">
    <text>Amino-acid biosynthesis; D-alanine biosynthesis; D-alanine from L-alanine: step 1/1.</text>
</comment>
<comment type="similarity">
    <text evidence="3">Belongs to the alanine racemase family.</text>
</comment>
<organism>
    <name type="scientific">Schizosaccharomyces pombe (strain 972 / ATCC 24843)</name>
    <name type="common">Fission yeast</name>
    <dbReference type="NCBI Taxonomy" id="284812"/>
    <lineage>
        <taxon>Eukaryota</taxon>
        <taxon>Fungi</taxon>
        <taxon>Dikarya</taxon>
        <taxon>Ascomycota</taxon>
        <taxon>Taphrinomycotina</taxon>
        <taxon>Schizosaccharomycetes</taxon>
        <taxon>Schizosaccharomycetales</taxon>
        <taxon>Schizosaccharomycetaceae</taxon>
        <taxon>Schizosaccharomyces</taxon>
    </lineage>
</organism>